<reference key="1">
    <citation type="submission" date="2005-08" db="EMBL/GenBank/DDBJ databases">
        <authorList>
            <consortium name="NIH - Mammalian Gene Collection (MGC) project"/>
        </authorList>
    </citation>
    <scope>NUCLEOTIDE SEQUENCE [LARGE SCALE MRNA]</scope>
    <source>
        <strain>Crossbred X Angus</strain>
        <tissue>Ileum</tissue>
    </source>
</reference>
<protein>
    <recommendedName>
        <fullName>Dipeptidase 1</fullName>
        <ecNumber evidence="4 7">3.4.13.19</ecNumber>
    </recommendedName>
    <alternativeName>
        <fullName evidence="8">Beta-lactamase</fullName>
        <ecNumber evidence="4">3.5.2.6</ecNumber>
    </alternativeName>
    <alternativeName>
        <fullName>Microsomal dipeptidase</fullName>
    </alternativeName>
</protein>
<dbReference type="EC" id="3.4.13.19" evidence="4 7"/>
<dbReference type="EC" id="3.5.2.6" evidence="4"/>
<dbReference type="EMBL" id="BC102783">
    <property type="protein sequence ID" value="AAI02784.1"/>
    <property type="molecule type" value="mRNA"/>
</dbReference>
<dbReference type="RefSeq" id="NP_001029644.1">
    <property type="nucleotide sequence ID" value="NM_001034472.2"/>
</dbReference>
<dbReference type="RefSeq" id="XP_005218637.1">
    <property type="nucleotide sequence ID" value="XM_005218580.5"/>
</dbReference>
<dbReference type="RefSeq" id="XP_005218638.1">
    <property type="nucleotide sequence ID" value="XM_005218581.3"/>
</dbReference>
<dbReference type="SMR" id="Q3SZM7"/>
<dbReference type="FunCoup" id="Q3SZM7">
    <property type="interactions" value="19"/>
</dbReference>
<dbReference type="STRING" id="9913.ENSBTAP00000069989"/>
<dbReference type="MEROPS" id="M19.001"/>
<dbReference type="GlyCosmos" id="Q3SZM7">
    <property type="glycosylation" value="3 sites, No reported glycans"/>
</dbReference>
<dbReference type="GlyGen" id="Q3SZM7">
    <property type="glycosylation" value="3 sites"/>
</dbReference>
<dbReference type="PaxDb" id="9913-ENSBTAP00000016201"/>
<dbReference type="GeneID" id="514685"/>
<dbReference type="KEGG" id="bta:514685"/>
<dbReference type="CTD" id="1800"/>
<dbReference type="VEuPathDB" id="HostDB:ENSBTAG00000033326"/>
<dbReference type="eggNOG" id="KOG4127">
    <property type="taxonomic scope" value="Eukaryota"/>
</dbReference>
<dbReference type="HOGENOM" id="CLU_031404_4_1_1"/>
<dbReference type="InParanoid" id="Q3SZM7"/>
<dbReference type="OrthoDB" id="445695at2759"/>
<dbReference type="TreeFam" id="TF324523"/>
<dbReference type="Reactome" id="R-BTA-2142691">
    <property type="pathway name" value="Synthesis of Leukotrienes (LT) and Eoxins (EX)"/>
</dbReference>
<dbReference type="Reactome" id="R-BTA-5423646">
    <property type="pathway name" value="Aflatoxin activation and detoxification"/>
</dbReference>
<dbReference type="Proteomes" id="UP000009136">
    <property type="component" value="Chromosome 18"/>
</dbReference>
<dbReference type="Bgee" id="ENSBTAG00000033326">
    <property type="expression patterns" value="Expressed in cortex of kidney and 57 other cell types or tissues"/>
</dbReference>
<dbReference type="GO" id="GO:0045177">
    <property type="term" value="C:apical part of cell"/>
    <property type="evidence" value="ECO:0000250"/>
    <property type="project" value="UniProtKB"/>
</dbReference>
<dbReference type="GO" id="GO:0016324">
    <property type="term" value="C:apical plasma membrane"/>
    <property type="evidence" value="ECO:0007669"/>
    <property type="project" value="UniProtKB-SubCell"/>
</dbReference>
<dbReference type="GO" id="GO:0005615">
    <property type="term" value="C:extracellular space"/>
    <property type="evidence" value="ECO:0000250"/>
    <property type="project" value="UniProtKB"/>
</dbReference>
<dbReference type="GO" id="GO:0005886">
    <property type="term" value="C:plasma membrane"/>
    <property type="evidence" value="ECO:0000250"/>
    <property type="project" value="UniProtKB"/>
</dbReference>
<dbReference type="GO" id="GO:0098552">
    <property type="term" value="C:side of membrane"/>
    <property type="evidence" value="ECO:0007669"/>
    <property type="project" value="UniProtKB-KW"/>
</dbReference>
<dbReference type="GO" id="GO:0008800">
    <property type="term" value="F:beta-lactamase activity"/>
    <property type="evidence" value="ECO:0000250"/>
    <property type="project" value="UniProtKB"/>
</dbReference>
<dbReference type="GO" id="GO:0016805">
    <property type="term" value="F:dipeptidase activity"/>
    <property type="evidence" value="ECO:0000250"/>
    <property type="project" value="UniProtKB"/>
</dbReference>
<dbReference type="GO" id="GO:0034235">
    <property type="term" value="F:GPI anchor binding"/>
    <property type="evidence" value="ECO:0000250"/>
    <property type="project" value="UniProtKB"/>
</dbReference>
<dbReference type="GO" id="GO:0070573">
    <property type="term" value="F:metallodipeptidase activity"/>
    <property type="evidence" value="ECO:0000250"/>
    <property type="project" value="UniProtKB"/>
</dbReference>
<dbReference type="GO" id="GO:0072341">
    <property type="term" value="F:modified amino acid binding"/>
    <property type="evidence" value="ECO:0000250"/>
    <property type="project" value="UniProtKB"/>
</dbReference>
<dbReference type="GO" id="GO:0008270">
    <property type="term" value="F:zinc ion binding"/>
    <property type="evidence" value="ECO:0000250"/>
    <property type="project" value="UniProtKB"/>
</dbReference>
<dbReference type="GO" id="GO:0016999">
    <property type="term" value="P:antibiotic metabolic process"/>
    <property type="evidence" value="ECO:0000250"/>
    <property type="project" value="UniProtKB"/>
</dbReference>
<dbReference type="GO" id="GO:0071277">
    <property type="term" value="P:cellular response to calcium ion"/>
    <property type="evidence" value="ECO:0000250"/>
    <property type="project" value="UniProtKB"/>
</dbReference>
<dbReference type="GO" id="GO:0071732">
    <property type="term" value="P:cellular response to nitric oxide"/>
    <property type="evidence" value="ECO:0000250"/>
    <property type="project" value="UniProtKB"/>
</dbReference>
<dbReference type="GO" id="GO:0006751">
    <property type="term" value="P:glutathione catabolic process"/>
    <property type="evidence" value="ECO:0000250"/>
    <property type="project" value="UniProtKB"/>
</dbReference>
<dbReference type="GO" id="GO:0050667">
    <property type="term" value="P:homocysteine metabolic process"/>
    <property type="evidence" value="ECO:0000250"/>
    <property type="project" value="UniProtKB"/>
</dbReference>
<dbReference type="GO" id="GO:0006954">
    <property type="term" value="P:inflammatory response"/>
    <property type="evidence" value="ECO:0000250"/>
    <property type="project" value="UniProtKB"/>
</dbReference>
<dbReference type="GO" id="GO:1901749">
    <property type="term" value="P:leukotriene D4 catabolic process"/>
    <property type="evidence" value="ECO:0000250"/>
    <property type="project" value="UniProtKB"/>
</dbReference>
<dbReference type="GO" id="GO:0006691">
    <property type="term" value="P:leukotriene metabolic process"/>
    <property type="evidence" value="ECO:0000250"/>
    <property type="project" value="UniProtKB"/>
</dbReference>
<dbReference type="GO" id="GO:0030336">
    <property type="term" value="P:negative regulation of cell migration"/>
    <property type="evidence" value="ECO:0000250"/>
    <property type="project" value="UniProtKB"/>
</dbReference>
<dbReference type="GO" id="GO:0030593">
    <property type="term" value="P:neutrophil chemotaxis"/>
    <property type="evidence" value="ECO:0000250"/>
    <property type="project" value="UniProtKB"/>
</dbReference>
<dbReference type="GO" id="GO:0006508">
    <property type="term" value="P:proteolysis"/>
    <property type="evidence" value="ECO:0007669"/>
    <property type="project" value="UniProtKB-KW"/>
</dbReference>
<dbReference type="CDD" id="cd01301">
    <property type="entry name" value="rDP_like"/>
    <property type="match status" value="1"/>
</dbReference>
<dbReference type="FunFam" id="3.20.20.140:FF:000030">
    <property type="entry name" value="Dipeptidase"/>
    <property type="match status" value="1"/>
</dbReference>
<dbReference type="Gene3D" id="3.20.20.140">
    <property type="entry name" value="Metal-dependent hydrolases"/>
    <property type="match status" value="1"/>
</dbReference>
<dbReference type="InterPro" id="IPR000180">
    <property type="entry name" value="Dipep_AS"/>
</dbReference>
<dbReference type="InterPro" id="IPR032466">
    <property type="entry name" value="Metal_Hydrolase"/>
</dbReference>
<dbReference type="InterPro" id="IPR008257">
    <property type="entry name" value="Pept_M19"/>
</dbReference>
<dbReference type="PANTHER" id="PTHR10443:SF38">
    <property type="entry name" value="DIPEPTIDASE 1"/>
    <property type="match status" value="1"/>
</dbReference>
<dbReference type="PANTHER" id="PTHR10443">
    <property type="entry name" value="MICROSOMAL DIPEPTIDASE"/>
    <property type="match status" value="1"/>
</dbReference>
<dbReference type="Pfam" id="PF01244">
    <property type="entry name" value="Peptidase_M19"/>
    <property type="match status" value="1"/>
</dbReference>
<dbReference type="SUPFAM" id="SSF51556">
    <property type="entry name" value="Metallo-dependent hydrolases"/>
    <property type="match status" value="1"/>
</dbReference>
<dbReference type="PROSITE" id="PS00869">
    <property type="entry name" value="RENAL_DIPEPTIDASE_1"/>
    <property type="match status" value="1"/>
</dbReference>
<dbReference type="PROSITE" id="PS51365">
    <property type="entry name" value="RENAL_DIPEPTIDASE_2"/>
    <property type="match status" value="1"/>
</dbReference>
<keyword id="KW-1003">Cell membrane</keyword>
<keyword id="KW-0224">Dipeptidase</keyword>
<keyword id="KW-1015">Disulfide bond</keyword>
<keyword id="KW-0325">Glycoprotein</keyword>
<keyword id="KW-0336">GPI-anchor</keyword>
<keyword id="KW-0378">Hydrolase</keyword>
<keyword id="KW-0443">Lipid metabolism</keyword>
<keyword id="KW-0449">Lipoprotein</keyword>
<keyword id="KW-0472">Membrane</keyword>
<keyword id="KW-0479">Metal-binding</keyword>
<keyword id="KW-0482">Metalloprotease</keyword>
<keyword id="KW-0645">Protease</keyword>
<keyword id="KW-1185">Reference proteome</keyword>
<keyword id="KW-0732">Signal</keyword>
<keyword id="KW-0862">Zinc</keyword>
<feature type="signal peptide" evidence="2">
    <location>
        <begin position="1"/>
        <end position="16"/>
    </location>
</feature>
<feature type="chain" id="PRO_0000231601" description="Dipeptidase 1">
    <location>
        <begin position="17"/>
        <end position="384"/>
    </location>
</feature>
<feature type="propeptide" id="PRO_0000231602" description="Removed in mature form" evidence="2">
    <location>
        <begin position="385"/>
        <end position="410"/>
    </location>
</feature>
<feature type="binding site" evidence="7">
    <location>
        <position position="36"/>
    </location>
    <ligand>
        <name>Zn(2+)</name>
        <dbReference type="ChEBI" id="CHEBI:29105"/>
        <label>1</label>
        <note>catalytic</note>
    </ligand>
</feature>
<feature type="binding site" evidence="7">
    <location>
        <position position="38"/>
    </location>
    <ligand>
        <name>Zn(2+)</name>
        <dbReference type="ChEBI" id="CHEBI:29105"/>
        <label>1</label>
        <note>catalytic</note>
    </ligand>
</feature>
<feature type="binding site" evidence="7">
    <location>
        <position position="141"/>
    </location>
    <ligand>
        <name>Zn(2+)</name>
        <dbReference type="ChEBI" id="CHEBI:29105"/>
        <label>1</label>
        <note>catalytic</note>
    </ligand>
</feature>
<feature type="binding site" evidence="7">
    <location>
        <position position="141"/>
    </location>
    <ligand>
        <name>Zn(2+)</name>
        <dbReference type="ChEBI" id="CHEBI:29105"/>
        <label>2</label>
        <note>catalytic</note>
    </ligand>
</feature>
<feature type="binding site" evidence="7">
    <location>
        <position position="168"/>
    </location>
    <ligand>
        <name>substrate</name>
    </ligand>
</feature>
<feature type="binding site" evidence="7">
    <location>
        <position position="214"/>
    </location>
    <ligand>
        <name>Zn(2+)</name>
        <dbReference type="ChEBI" id="CHEBI:29105"/>
        <label>2</label>
        <note>catalytic</note>
    </ligand>
</feature>
<feature type="binding site" evidence="7">
    <location>
        <position position="235"/>
    </location>
    <ligand>
        <name>Zn(2+)</name>
        <dbReference type="ChEBI" id="CHEBI:29105"/>
        <label>2</label>
        <note>catalytic</note>
    </ligand>
</feature>
<feature type="binding site" evidence="7">
    <location>
        <position position="246"/>
    </location>
    <ligand>
        <name>substrate</name>
    </ligand>
</feature>
<feature type="binding site" evidence="7">
    <location>
        <position position="304"/>
    </location>
    <ligand>
        <name>substrate</name>
    </ligand>
</feature>
<feature type="lipid moiety-binding region" description="GPI-anchor amidated serine" evidence="3">
    <location>
        <position position="384"/>
    </location>
</feature>
<feature type="glycosylation site" description="N-linked (GlcNAc...) asparagine" evidence="1">
    <location>
        <position position="57"/>
    </location>
</feature>
<feature type="glycosylation site" description="N-linked (GlcNAc...) asparagine" evidence="6">
    <location>
        <position position="62"/>
    </location>
</feature>
<feature type="glycosylation site" description="N-linked (GlcNAc...) asparagine" evidence="6">
    <location>
        <position position="279"/>
    </location>
</feature>
<feature type="disulfide bond" evidence="7">
    <location>
        <begin position="87"/>
        <end position="170"/>
    </location>
</feature>
<feature type="disulfide bond" evidence="7">
    <location>
        <begin position="242"/>
        <end position="274"/>
    </location>
</feature>
<feature type="disulfide bond" description="Interchain" evidence="7">
    <location>
        <position position="377"/>
    </location>
</feature>
<proteinExistence type="evidence at transcript level"/>
<organism>
    <name type="scientific">Bos taurus</name>
    <name type="common">Bovine</name>
    <dbReference type="NCBI Taxonomy" id="9913"/>
    <lineage>
        <taxon>Eukaryota</taxon>
        <taxon>Metazoa</taxon>
        <taxon>Chordata</taxon>
        <taxon>Craniata</taxon>
        <taxon>Vertebrata</taxon>
        <taxon>Euteleostomi</taxon>
        <taxon>Mammalia</taxon>
        <taxon>Eutheria</taxon>
        <taxon>Laurasiatheria</taxon>
        <taxon>Artiodactyla</taxon>
        <taxon>Ruminantia</taxon>
        <taxon>Pecora</taxon>
        <taxon>Bovidae</taxon>
        <taxon>Bovinae</taxon>
        <taxon>Bos</taxon>
    </lineage>
</organism>
<evidence type="ECO:0000250" key="1"/>
<evidence type="ECO:0000250" key="2">
    <source>
        <dbReference type="UniProtKB" id="P16444"/>
    </source>
</evidence>
<evidence type="ECO:0000250" key="3">
    <source>
        <dbReference type="UniProtKB" id="P22412"/>
    </source>
</evidence>
<evidence type="ECO:0000250" key="4">
    <source>
        <dbReference type="UniProtKB" id="P31428"/>
    </source>
</evidence>
<evidence type="ECO:0000250" key="5">
    <source>
        <dbReference type="UniProtKB" id="P31429"/>
    </source>
</evidence>
<evidence type="ECO:0000255" key="6"/>
<evidence type="ECO:0000255" key="7">
    <source>
        <dbReference type="PROSITE-ProRule" id="PRU10073"/>
    </source>
</evidence>
<evidence type="ECO:0000305" key="8"/>
<gene>
    <name type="primary">DPEP1</name>
</gene>
<name>DPEP1_BOVIN</name>
<accession>Q3SZM7</accession>
<comment type="function">
    <text evidence="4">Hydrolyzes a wide range of dipeptides including the conversion of leukotriene D4 to leukotriene E4. Hydrolyzes cystinyl-bis-glycine (cys-bis-gly) formed during glutathione degradation. Also possesses beta lactamase activity and hydrolytically inactivates beta-lactam antibiotics.</text>
</comment>
<comment type="function">
    <text evidence="4">Independently of its dipeptidase activity, acts as an adhesion receptor for neutrophil recruitment from bloodstream into inflamed lungs and liver.</text>
</comment>
<comment type="catalytic activity">
    <reaction evidence="4 7">
        <text>an L-aminoacyl-L-amino acid + H2O = 2 an L-alpha-amino acid</text>
        <dbReference type="Rhea" id="RHEA:48940"/>
        <dbReference type="ChEBI" id="CHEBI:15377"/>
        <dbReference type="ChEBI" id="CHEBI:59869"/>
        <dbReference type="ChEBI" id="CHEBI:77460"/>
        <dbReference type="EC" id="3.4.13.19"/>
    </reaction>
</comment>
<comment type="catalytic activity">
    <reaction evidence="4">
        <text>leukotriene D4 + H2O = leukotriene E4 + glycine</text>
        <dbReference type="Rhea" id="RHEA:48616"/>
        <dbReference type="ChEBI" id="CHEBI:15377"/>
        <dbReference type="ChEBI" id="CHEBI:57305"/>
        <dbReference type="ChEBI" id="CHEBI:57462"/>
        <dbReference type="ChEBI" id="CHEBI:63166"/>
    </reaction>
</comment>
<comment type="catalytic activity">
    <reaction evidence="4">
        <text>L-cystine-bis-glycine + 2 H2O = L-cystine + 2 glycine</text>
        <dbReference type="Rhea" id="RHEA:60520"/>
        <dbReference type="ChEBI" id="CHEBI:15377"/>
        <dbReference type="ChEBI" id="CHEBI:35491"/>
        <dbReference type="ChEBI" id="CHEBI:57305"/>
        <dbReference type="ChEBI" id="CHEBI:143812"/>
    </reaction>
</comment>
<comment type="catalytic activity">
    <reaction evidence="4">
        <text>a beta-lactam + H2O = a substituted beta-amino acid</text>
        <dbReference type="Rhea" id="RHEA:20401"/>
        <dbReference type="ChEBI" id="CHEBI:15377"/>
        <dbReference type="ChEBI" id="CHEBI:35627"/>
        <dbReference type="ChEBI" id="CHEBI:140347"/>
        <dbReference type="EC" id="3.5.2.6"/>
    </reaction>
</comment>
<comment type="catalytic activity">
    <reaction evidence="4">
        <text>glycyldehydrophenylalanine + H2O = 2,3-didehydrophenylalanine + glycine</text>
        <dbReference type="Rhea" id="RHEA:62704"/>
        <dbReference type="ChEBI" id="CHEBI:15377"/>
        <dbReference type="ChEBI" id="CHEBI:57305"/>
        <dbReference type="ChEBI" id="CHEBI:145925"/>
        <dbReference type="ChEBI" id="CHEBI:145926"/>
    </reaction>
</comment>
<comment type="cofactor">
    <cofactor evidence="2 7">
        <name>Zn(2+)</name>
        <dbReference type="ChEBI" id="CHEBI:29105"/>
    </cofactor>
</comment>
<comment type="activity regulation">
    <text evidence="2">Inhibited by L-penicillamine. Inhibited by cilastatin.</text>
</comment>
<comment type="subunit">
    <text evidence="2 7">Homodimer; disulfide-linked.</text>
</comment>
<comment type="subcellular location">
    <subcellularLocation>
        <location evidence="2">Apical cell membrane</location>
        <topology evidence="2">Lipid-anchor</topology>
        <topology evidence="2">GPI-anchor</topology>
    </subcellularLocation>
    <text evidence="5">Brush border membrane.</text>
</comment>
<comment type="similarity">
    <text evidence="7">Belongs to the metallo-dependent hydrolases superfamily. Peptidase M19 family.</text>
</comment>
<sequence length="410" mass="45127">MWTGWWLWPLVAVCTADQFRDNAVRLMQSTPVIDGHNDLPWQLLKRFNNQLQDPRANLTSLNGTHTNIPKLKAGFVGAQFWSAYTPCDTQNKDSVKRTLEQIDVIQRMCQLYPETFLCVTDSAGIQQAFQEGKVASLVGVEGGHSIDSSLGVLRALYHLGMRYLTLTHSCNTPWADNWLVDTGEDEAQSQGLSSFGQSVVKEMNRLGVIIDLAHVSVATMEAALQLSKAPVIFSHSSAYSVCRHRRNVPDHVLQLVKQTGSLVMVNFYNDYVSCKAEANLSQVADHLDYIKKVAGAGAVGFGGDYDGVSRLPSGLEDVSKYPDLVAELLRRQWTEEEVRGALAENLLRVFKAVEQASDHKQAPGEEPIPLGQLEASCRTNYGYSGAPSLHLQPGTLLASLVTLLLSLCLL</sequence>